<feature type="chain" id="PRO_1000088277" description="Ubiquinone/menaquinone biosynthesis C-methyltransferase UbiE">
    <location>
        <begin position="1"/>
        <end position="269"/>
    </location>
</feature>
<feature type="binding site" evidence="1">
    <location>
        <position position="92"/>
    </location>
    <ligand>
        <name>S-adenosyl-L-methionine</name>
        <dbReference type="ChEBI" id="CHEBI:59789"/>
    </ligand>
</feature>
<feature type="binding site" evidence="1">
    <location>
        <position position="113"/>
    </location>
    <ligand>
        <name>S-adenosyl-L-methionine</name>
        <dbReference type="ChEBI" id="CHEBI:59789"/>
    </ligand>
</feature>
<feature type="binding site" evidence="1">
    <location>
        <begin position="141"/>
        <end position="142"/>
    </location>
    <ligand>
        <name>S-adenosyl-L-methionine</name>
        <dbReference type="ChEBI" id="CHEBI:59789"/>
    </ligand>
</feature>
<comment type="function">
    <text evidence="1">Methyltransferase required for the conversion of demethylmenaquinol (DMKH2) to menaquinol (MKH2) and the conversion of 2-polyprenyl-6-methoxy-1,4-benzoquinol (DDMQH2) to 2-polyprenyl-3-methyl-6-methoxy-1,4-benzoquinol (DMQH2).</text>
</comment>
<comment type="catalytic activity">
    <reaction evidence="1">
        <text>a 2-demethylmenaquinol + S-adenosyl-L-methionine = a menaquinol + S-adenosyl-L-homocysteine + H(+)</text>
        <dbReference type="Rhea" id="RHEA:42640"/>
        <dbReference type="Rhea" id="RHEA-COMP:9539"/>
        <dbReference type="Rhea" id="RHEA-COMP:9563"/>
        <dbReference type="ChEBI" id="CHEBI:15378"/>
        <dbReference type="ChEBI" id="CHEBI:18151"/>
        <dbReference type="ChEBI" id="CHEBI:55437"/>
        <dbReference type="ChEBI" id="CHEBI:57856"/>
        <dbReference type="ChEBI" id="CHEBI:59789"/>
        <dbReference type="EC" id="2.1.1.163"/>
    </reaction>
</comment>
<comment type="catalytic activity">
    <reaction evidence="1">
        <text>a 2-methoxy-6-(all-trans-polyprenyl)benzene-1,4-diol + S-adenosyl-L-methionine = a 5-methoxy-2-methyl-3-(all-trans-polyprenyl)benzene-1,4-diol + S-adenosyl-L-homocysteine + H(+)</text>
        <dbReference type="Rhea" id="RHEA:28286"/>
        <dbReference type="Rhea" id="RHEA-COMP:10858"/>
        <dbReference type="Rhea" id="RHEA-COMP:10859"/>
        <dbReference type="ChEBI" id="CHEBI:15378"/>
        <dbReference type="ChEBI" id="CHEBI:57856"/>
        <dbReference type="ChEBI" id="CHEBI:59789"/>
        <dbReference type="ChEBI" id="CHEBI:84166"/>
        <dbReference type="ChEBI" id="CHEBI:84167"/>
        <dbReference type="EC" id="2.1.1.201"/>
    </reaction>
</comment>
<comment type="pathway">
    <text evidence="1">Quinol/quinone metabolism; menaquinone biosynthesis; menaquinol from 1,4-dihydroxy-2-naphthoate: step 2/2.</text>
</comment>
<comment type="pathway">
    <text evidence="1">Cofactor biosynthesis; ubiquinone biosynthesis.</text>
</comment>
<comment type="similarity">
    <text evidence="1">Belongs to the class I-like SAM-binding methyltransferase superfamily. MenG/UbiE family.</text>
</comment>
<reference key="1">
    <citation type="submission" date="2007-12" db="EMBL/GenBank/DDBJ databases">
        <title>Brucella suis ATCC 23445 whole genome shotgun sequencing project.</title>
        <authorList>
            <person name="Setubal J.C."/>
            <person name="Bowns C."/>
            <person name="Boyle S."/>
            <person name="Crasta O.R."/>
            <person name="Czar M.J."/>
            <person name="Dharmanolla C."/>
            <person name="Gillespie J.J."/>
            <person name="Kenyon R.W."/>
            <person name="Lu J."/>
            <person name="Mane S."/>
            <person name="Mohapatra S."/>
            <person name="Nagrani S."/>
            <person name="Purkayastha A."/>
            <person name="Rajasimha H.K."/>
            <person name="Shallom J.M."/>
            <person name="Shallom S."/>
            <person name="Shukla M."/>
            <person name="Snyder E.E."/>
            <person name="Sobral B.W."/>
            <person name="Wattam A.R."/>
            <person name="Will R."/>
            <person name="Williams K."/>
            <person name="Yoo H."/>
            <person name="Bruce D."/>
            <person name="Detter C."/>
            <person name="Munk C."/>
            <person name="Brettin T.S."/>
        </authorList>
    </citation>
    <scope>NUCLEOTIDE SEQUENCE [LARGE SCALE GENOMIC DNA]</scope>
    <source>
        <strain>ATCC 23445 / NCTC 10510</strain>
    </source>
</reference>
<dbReference type="EC" id="2.1.1.163" evidence="1"/>
<dbReference type="EC" id="2.1.1.201" evidence="1"/>
<dbReference type="EMBL" id="CP000912">
    <property type="protein sequence ID" value="ABY40010.1"/>
    <property type="molecule type" value="Genomic_DNA"/>
</dbReference>
<dbReference type="RefSeq" id="WP_006074183.1">
    <property type="nucleotide sequence ID" value="NC_010167.1"/>
</dbReference>
<dbReference type="SMR" id="A9WW74"/>
<dbReference type="KEGG" id="bmt:BSUIS_B1061"/>
<dbReference type="HOGENOM" id="CLU_037990_0_0_5"/>
<dbReference type="UniPathway" id="UPA00079">
    <property type="reaction ID" value="UER00169"/>
</dbReference>
<dbReference type="UniPathway" id="UPA00232"/>
<dbReference type="Proteomes" id="UP000008545">
    <property type="component" value="Chromosome II"/>
</dbReference>
<dbReference type="GO" id="GO:0008425">
    <property type="term" value="F:2-methoxy-6-polyprenyl-1,4-benzoquinol methyltransferase activity"/>
    <property type="evidence" value="ECO:0007669"/>
    <property type="project" value="UniProtKB-UniRule"/>
</dbReference>
<dbReference type="GO" id="GO:0043770">
    <property type="term" value="F:demethylmenaquinone methyltransferase activity"/>
    <property type="evidence" value="ECO:0007669"/>
    <property type="project" value="UniProtKB-UniRule"/>
</dbReference>
<dbReference type="GO" id="GO:0009060">
    <property type="term" value="P:aerobic respiration"/>
    <property type="evidence" value="ECO:0007669"/>
    <property type="project" value="UniProtKB-UniRule"/>
</dbReference>
<dbReference type="GO" id="GO:0009234">
    <property type="term" value="P:menaquinone biosynthetic process"/>
    <property type="evidence" value="ECO:0007669"/>
    <property type="project" value="UniProtKB-UniRule"/>
</dbReference>
<dbReference type="GO" id="GO:0032259">
    <property type="term" value="P:methylation"/>
    <property type="evidence" value="ECO:0007669"/>
    <property type="project" value="UniProtKB-KW"/>
</dbReference>
<dbReference type="CDD" id="cd02440">
    <property type="entry name" value="AdoMet_MTases"/>
    <property type="match status" value="1"/>
</dbReference>
<dbReference type="FunFam" id="3.40.50.150:FF:000064">
    <property type="entry name" value="2-methoxy-6-polyprenyl-1,4-benzoquinol methylase, mitochondrial"/>
    <property type="match status" value="1"/>
</dbReference>
<dbReference type="Gene3D" id="3.40.50.150">
    <property type="entry name" value="Vaccinia Virus protein VP39"/>
    <property type="match status" value="1"/>
</dbReference>
<dbReference type="HAMAP" id="MF_01813">
    <property type="entry name" value="MenG_UbiE_methyltr"/>
    <property type="match status" value="1"/>
</dbReference>
<dbReference type="InterPro" id="IPR029063">
    <property type="entry name" value="SAM-dependent_MTases_sf"/>
</dbReference>
<dbReference type="InterPro" id="IPR004033">
    <property type="entry name" value="UbiE/COQ5_MeTrFase"/>
</dbReference>
<dbReference type="InterPro" id="IPR023576">
    <property type="entry name" value="UbiE/COQ5_MeTrFase_CS"/>
</dbReference>
<dbReference type="NCBIfam" id="TIGR01934">
    <property type="entry name" value="MenG_MenH_UbiE"/>
    <property type="match status" value="1"/>
</dbReference>
<dbReference type="NCBIfam" id="NF001242">
    <property type="entry name" value="PRK00216.1-3"/>
    <property type="match status" value="1"/>
</dbReference>
<dbReference type="NCBIfam" id="NF001244">
    <property type="entry name" value="PRK00216.1-5"/>
    <property type="match status" value="1"/>
</dbReference>
<dbReference type="PANTHER" id="PTHR43591:SF24">
    <property type="entry name" value="2-METHOXY-6-POLYPRENYL-1,4-BENZOQUINOL METHYLASE, MITOCHONDRIAL"/>
    <property type="match status" value="1"/>
</dbReference>
<dbReference type="PANTHER" id="PTHR43591">
    <property type="entry name" value="METHYLTRANSFERASE"/>
    <property type="match status" value="1"/>
</dbReference>
<dbReference type="Pfam" id="PF01209">
    <property type="entry name" value="Ubie_methyltran"/>
    <property type="match status" value="1"/>
</dbReference>
<dbReference type="SUPFAM" id="SSF53335">
    <property type="entry name" value="S-adenosyl-L-methionine-dependent methyltransferases"/>
    <property type="match status" value="1"/>
</dbReference>
<dbReference type="PROSITE" id="PS51608">
    <property type="entry name" value="SAM_MT_UBIE"/>
    <property type="match status" value="1"/>
</dbReference>
<dbReference type="PROSITE" id="PS01183">
    <property type="entry name" value="UBIE_1"/>
    <property type="match status" value="1"/>
</dbReference>
<sequence>MSQQNGNVNRVGAQDRVGASGGMEHSFGFKAVDENEKQGLVNDVFHKVAKRYDIMNDLMSAGMHRVWKDAMVAWLAPSKRPGWTSLDVAGGTGDIAFRIVEASGRQAHVTILDINGSMLGVGRERAIKKGLIDNLEFVEANAEELPFEDNSFDAYTIAFGIRNVPHIDKALSEAYCVLKPGGRFLCLEFSEVELPVLDKVYDEWSFRAIPRIGKMITGDADSYSYLVESIRKFPKQQDFAAMIEKAGFERVSYRNFTGGIAALHSGWKL</sequence>
<protein>
    <recommendedName>
        <fullName evidence="1">Ubiquinone/menaquinone biosynthesis C-methyltransferase UbiE</fullName>
        <ecNumber evidence="1">2.1.1.163</ecNumber>
        <ecNumber evidence="1">2.1.1.201</ecNumber>
    </recommendedName>
    <alternativeName>
        <fullName evidence="1">2-methoxy-6-polyprenyl-1,4-benzoquinol methylase</fullName>
    </alternativeName>
    <alternativeName>
        <fullName evidence="1">Demethylmenaquinone methyltransferase</fullName>
    </alternativeName>
</protein>
<accession>A9WW74</accession>
<gene>
    <name evidence="1" type="primary">ubiE</name>
    <name type="ordered locus">BSUIS_B1061</name>
</gene>
<proteinExistence type="inferred from homology"/>
<name>UBIE_BRUSI</name>
<evidence type="ECO:0000255" key="1">
    <source>
        <dbReference type="HAMAP-Rule" id="MF_01813"/>
    </source>
</evidence>
<keyword id="KW-0474">Menaquinone biosynthesis</keyword>
<keyword id="KW-0489">Methyltransferase</keyword>
<keyword id="KW-0949">S-adenosyl-L-methionine</keyword>
<keyword id="KW-0808">Transferase</keyword>
<keyword id="KW-0831">Ubiquinone biosynthesis</keyword>
<organism>
    <name type="scientific">Brucella suis (strain ATCC 23445 / NCTC 10510)</name>
    <dbReference type="NCBI Taxonomy" id="470137"/>
    <lineage>
        <taxon>Bacteria</taxon>
        <taxon>Pseudomonadati</taxon>
        <taxon>Pseudomonadota</taxon>
        <taxon>Alphaproteobacteria</taxon>
        <taxon>Hyphomicrobiales</taxon>
        <taxon>Brucellaceae</taxon>
        <taxon>Brucella/Ochrobactrum group</taxon>
        <taxon>Brucella</taxon>
    </lineage>
</organism>